<sequence>MAPVKKTVTKGSKKKKQLLKFTLDCTHPVEDGIMDAANFEQFLHDRIKVNGKVGNLGGGVVSIERSKSKITVSSEVPFSKRYLKYLTKKYLKKNNLRDWLRVVANSKESYELRYFQINQDEEEEEDED</sequence>
<dbReference type="EMBL" id="CR760330">
    <property type="protein sequence ID" value="CAJ82701.1"/>
    <property type="molecule type" value="mRNA"/>
</dbReference>
<dbReference type="EMBL" id="BC135496">
    <property type="protein sequence ID" value="AAI35497.1"/>
    <property type="molecule type" value="mRNA"/>
</dbReference>
<dbReference type="RefSeq" id="NP_001016655.1">
    <property type="nucleotide sequence ID" value="NM_001016655.2"/>
</dbReference>
<dbReference type="SMR" id="Q28IL6"/>
<dbReference type="FunCoup" id="Q28IL6">
    <property type="interactions" value="1925"/>
</dbReference>
<dbReference type="STRING" id="8364.ENSXETP00000001547"/>
<dbReference type="PaxDb" id="8364-ENSXETP00000006384"/>
<dbReference type="DNASU" id="549409"/>
<dbReference type="GeneID" id="549409"/>
<dbReference type="KEGG" id="xtr:549409"/>
<dbReference type="AGR" id="Xenbase:XB-GENE-978439"/>
<dbReference type="CTD" id="6146"/>
<dbReference type="Xenbase" id="XB-GENE-978439">
    <property type="gene designation" value="rpl22"/>
</dbReference>
<dbReference type="eggNOG" id="KOG3434">
    <property type="taxonomic scope" value="Eukaryota"/>
</dbReference>
<dbReference type="HOGENOM" id="CLU_105624_0_1_1"/>
<dbReference type="InParanoid" id="Q28IL6"/>
<dbReference type="OMA" id="YQLRFYN"/>
<dbReference type="PhylomeDB" id="Q28IL6"/>
<dbReference type="TreeFam" id="TF313018"/>
<dbReference type="Reactome" id="R-XTR-156827">
    <property type="pathway name" value="L13a-mediated translational silencing of Ceruloplasmin expression"/>
</dbReference>
<dbReference type="Reactome" id="R-XTR-1799339">
    <property type="pathway name" value="SRP-dependent cotranslational protein targeting to membrane"/>
</dbReference>
<dbReference type="Reactome" id="R-XTR-6791226">
    <property type="pathway name" value="Major pathway of rRNA processing in the nucleolus and cytosol"/>
</dbReference>
<dbReference type="Reactome" id="R-XTR-72689">
    <property type="pathway name" value="Formation of a pool of free 40S subunits"/>
</dbReference>
<dbReference type="Reactome" id="R-XTR-72706">
    <property type="pathway name" value="GTP hydrolysis and joining of the 60S ribosomal subunit"/>
</dbReference>
<dbReference type="Reactome" id="R-XTR-975956">
    <property type="pathway name" value="Nonsense Mediated Decay (NMD) independent of the Exon Junction Complex (EJC)"/>
</dbReference>
<dbReference type="Reactome" id="R-XTR-975957">
    <property type="pathway name" value="Nonsense Mediated Decay (NMD) enhanced by the Exon Junction Complex (EJC)"/>
</dbReference>
<dbReference type="Proteomes" id="UP000008143">
    <property type="component" value="Chromosome 7"/>
</dbReference>
<dbReference type="Bgee" id="ENSXETG00000002914">
    <property type="expression patterns" value="Expressed in testis and 13 other cell types or tissues"/>
</dbReference>
<dbReference type="ExpressionAtlas" id="Q28IL6">
    <property type="expression patterns" value="differential"/>
</dbReference>
<dbReference type="GO" id="GO:0005737">
    <property type="term" value="C:cytoplasm"/>
    <property type="evidence" value="ECO:0007669"/>
    <property type="project" value="UniProtKB-SubCell"/>
</dbReference>
<dbReference type="GO" id="GO:1990904">
    <property type="term" value="C:ribonucleoprotein complex"/>
    <property type="evidence" value="ECO:0007669"/>
    <property type="project" value="UniProtKB-KW"/>
</dbReference>
<dbReference type="GO" id="GO:0005840">
    <property type="term" value="C:ribosome"/>
    <property type="evidence" value="ECO:0007669"/>
    <property type="project" value="UniProtKB-KW"/>
</dbReference>
<dbReference type="GO" id="GO:0003735">
    <property type="term" value="F:structural constituent of ribosome"/>
    <property type="evidence" value="ECO:0007669"/>
    <property type="project" value="InterPro"/>
</dbReference>
<dbReference type="GO" id="GO:0006412">
    <property type="term" value="P:translation"/>
    <property type="evidence" value="ECO:0007669"/>
    <property type="project" value="InterPro"/>
</dbReference>
<dbReference type="FunFam" id="3.30.1360.210:FF:000001">
    <property type="entry name" value="60S ribosomal protein L22 1"/>
    <property type="match status" value="1"/>
</dbReference>
<dbReference type="Gene3D" id="3.30.1360.210">
    <property type="match status" value="1"/>
</dbReference>
<dbReference type="InterPro" id="IPR002671">
    <property type="entry name" value="Ribosomal_eL22"/>
</dbReference>
<dbReference type="InterPro" id="IPR038526">
    <property type="entry name" value="Ribosomal_eL22_sf"/>
</dbReference>
<dbReference type="PANTHER" id="PTHR10064">
    <property type="entry name" value="60S RIBOSOMAL PROTEIN L22"/>
    <property type="match status" value="1"/>
</dbReference>
<dbReference type="PANTHER" id="PTHR10064:SF2">
    <property type="entry name" value="LARGE RIBOSOMAL SUBUNIT PROTEIN EL22"/>
    <property type="match status" value="1"/>
</dbReference>
<dbReference type="Pfam" id="PF01776">
    <property type="entry name" value="Ribosomal_L22e"/>
    <property type="match status" value="1"/>
</dbReference>
<feature type="chain" id="PRO_0000240440" description="Large ribosomal subunit protein eL22">
    <location>
        <begin position="1"/>
        <end position="128"/>
    </location>
</feature>
<evidence type="ECO:0000250" key="1">
    <source>
        <dbReference type="UniProtKB" id="P35268"/>
    </source>
</evidence>
<evidence type="ECO:0000305" key="2"/>
<reference key="1">
    <citation type="submission" date="2006-03" db="EMBL/GenBank/DDBJ databases">
        <authorList>
            <consortium name="Sanger Xenopus tropicalis EST/cDNA project"/>
        </authorList>
    </citation>
    <scope>NUCLEOTIDE SEQUENCE [LARGE SCALE MRNA]</scope>
    <source>
        <tissue>Neurula</tissue>
    </source>
</reference>
<reference key="2">
    <citation type="submission" date="2007-03" db="EMBL/GenBank/DDBJ databases">
        <authorList>
            <consortium name="NIH - Xenopus Gene Collection (XGC) project"/>
        </authorList>
    </citation>
    <scope>NUCLEOTIDE SEQUENCE [LARGE SCALE MRNA]</scope>
    <source>
        <tissue>Embryo</tissue>
    </source>
</reference>
<accession>Q28IL6</accession>
<accession>A4IHE7</accession>
<protein>
    <recommendedName>
        <fullName evidence="2">Large ribosomal subunit protein eL22</fullName>
    </recommendedName>
    <alternativeName>
        <fullName>60S ribosomal protein L22</fullName>
    </alternativeName>
</protein>
<name>RL22_XENTR</name>
<organism>
    <name type="scientific">Xenopus tropicalis</name>
    <name type="common">Western clawed frog</name>
    <name type="synonym">Silurana tropicalis</name>
    <dbReference type="NCBI Taxonomy" id="8364"/>
    <lineage>
        <taxon>Eukaryota</taxon>
        <taxon>Metazoa</taxon>
        <taxon>Chordata</taxon>
        <taxon>Craniata</taxon>
        <taxon>Vertebrata</taxon>
        <taxon>Euteleostomi</taxon>
        <taxon>Amphibia</taxon>
        <taxon>Batrachia</taxon>
        <taxon>Anura</taxon>
        <taxon>Pipoidea</taxon>
        <taxon>Pipidae</taxon>
        <taxon>Xenopodinae</taxon>
        <taxon>Xenopus</taxon>
        <taxon>Silurana</taxon>
    </lineage>
</organism>
<comment type="function">
    <text evidence="1">Component of the large ribosomal subunit. The ribosome is a large ribonucleoprotein complex responsible for the synthesis of proteins in the cell.</text>
</comment>
<comment type="subunit">
    <text evidence="1">Component of the large ribosomal subunit.</text>
</comment>
<comment type="subcellular location">
    <subcellularLocation>
        <location evidence="1">Cytoplasm</location>
    </subcellularLocation>
</comment>
<comment type="similarity">
    <text evidence="2">Belongs to the eukaryotic ribosomal protein eL22 family.</text>
</comment>
<gene>
    <name type="primary">rpl22</name>
    <name type="ORF">TNeu067f05.1</name>
</gene>
<proteinExistence type="evidence at transcript level"/>
<keyword id="KW-0963">Cytoplasm</keyword>
<keyword id="KW-1185">Reference proteome</keyword>
<keyword id="KW-0687">Ribonucleoprotein</keyword>
<keyword id="KW-0689">Ribosomal protein</keyword>